<sequence>MEKNGNNRKLRVCVATCNRADYSKLAPIMFGIKTEPAFFELDVVVLGSHLIDDYGNTYRMIEQDDFDINTRLHTIVRGEDEAAMVESVGLALVKLPDVLNRLKPDIMIVHGDRFDALALATSAALMNIRILHIEGGEVSGTIDDSIRHAITKLAHYHVCCTRSAEQHLISMCEDHDRILLAGCPSYDKLLSAKNKDYMSIIRMWLGDDVKCKDYIVALQHPVTTDIKHSIKMFELTLDALISFNKRTLVLFPNIDAGSKEMVRVMRKKGIEHHPNFRAVKHVPFDQFIQLVAHAGCMIGNSSCGVREVGAFGTPVINLGTRQIGRETGENVLHVRDADTQDKILQALHLQFGKQYPCSKIYGDGNAVPRILKFLKSIDLQEPLQKKFCFPPVKENISQDIDHILETLSALAVDLGGTNLRVAIVSMKGEIVKKYTQFNPKTYEERISLILQMCVEAAAEAVKLNCRILGVGISTGGRVNPQEGVVLHSTKLIQEWNSVDLRTPLSDTLHLPVWVDNDGNCAAMAERKFGQGKGQENFVTLITGTGIGGGIIHQHELIHGSSFCAAELGHLVVSLDGPDCSCGSHGCIEAYASGMALQREAKKLHDEDLLLVEGMSVPKDEAVGALHLIQAAKLGNVKAQSILRTAGTALGLGVVNILHTMNPSLVILSGVLASHYIHIVRDVIRQQALSSVQDVDVVVSDLVDPALLGAASMVLDYTTRRIH</sequence>
<feature type="chain" id="PRO_0000095718" description="Bifunctional UDP-N-acetylglucosamine 2-epimerase/N-acetylmannosamine kinase">
    <location>
        <begin position="1"/>
        <end position="722"/>
    </location>
</feature>
<feature type="region of interest" description="UDP-N-acetylglucosamine 2-epimerase" evidence="5">
    <location>
        <begin position="1"/>
        <end status="unknown"/>
    </location>
</feature>
<feature type="region of interest" description="N-acetylmannosamine kinase" evidence="5">
    <location>
        <begin position="406"/>
        <end position="722"/>
    </location>
</feature>
<feature type="active site" evidence="2">
    <location>
        <position position="517"/>
    </location>
</feature>
<feature type="binding site" evidence="2">
    <location>
        <position position="19"/>
    </location>
    <ligand>
        <name>UDP</name>
        <dbReference type="ChEBI" id="CHEBI:58223"/>
    </ligand>
</feature>
<feature type="binding site" evidence="2">
    <location>
        <position position="23"/>
    </location>
    <ligand>
        <name>UDP</name>
        <dbReference type="ChEBI" id="CHEBI:58223"/>
    </ligand>
</feature>
<feature type="binding site" evidence="2">
    <location>
        <position position="113"/>
    </location>
    <ligand>
        <name>UDP</name>
        <dbReference type="ChEBI" id="CHEBI:58223"/>
    </ligand>
</feature>
<feature type="binding site" evidence="2">
    <location>
        <position position="220"/>
    </location>
    <ligand>
        <name>UDP</name>
        <dbReference type="ChEBI" id="CHEBI:58223"/>
    </ligand>
</feature>
<feature type="binding site" evidence="2">
    <location>
        <position position="253"/>
    </location>
    <ligand>
        <name>UDP</name>
        <dbReference type="ChEBI" id="CHEBI:58223"/>
    </ligand>
</feature>
<feature type="binding site" evidence="2">
    <location>
        <position position="259"/>
    </location>
    <ligand>
        <name>CMP-N-acetyl-beta-neuraminate</name>
        <dbReference type="ChEBI" id="CHEBI:57812"/>
        <note>allosteric inhibitor</note>
    </ligand>
</feature>
<feature type="binding site" evidence="2">
    <location>
        <position position="271"/>
    </location>
    <ligand>
        <name>CMP-N-acetyl-beta-neuraminate</name>
        <dbReference type="ChEBI" id="CHEBI:57812"/>
        <note>allosteric inhibitor</note>
    </ligand>
</feature>
<feature type="binding site" evidence="2">
    <location>
        <position position="280"/>
    </location>
    <ligand>
        <name>CMP-N-acetyl-beta-neuraminate</name>
        <dbReference type="ChEBI" id="CHEBI:57812"/>
        <note>allosteric inhibitor</note>
    </ligand>
</feature>
<feature type="binding site" evidence="2">
    <location>
        <position position="281"/>
    </location>
    <ligand>
        <name>CMP-N-acetyl-beta-neuraminate</name>
        <dbReference type="ChEBI" id="CHEBI:57812"/>
        <note>allosteric inhibitor</note>
    </ligand>
</feature>
<feature type="binding site" evidence="2">
    <location>
        <position position="282"/>
    </location>
    <ligand>
        <name>UDP</name>
        <dbReference type="ChEBI" id="CHEBI:58223"/>
    </ligand>
</feature>
<feature type="binding site" evidence="2">
    <location>
        <position position="301"/>
    </location>
    <ligand>
        <name>UDP</name>
        <dbReference type="ChEBI" id="CHEBI:58223"/>
    </ligand>
</feature>
<feature type="binding site" evidence="2">
    <location>
        <position position="302"/>
    </location>
    <ligand>
        <name>UDP</name>
        <dbReference type="ChEBI" id="CHEBI:58223"/>
    </ligand>
</feature>
<feature type="binding site" evidence="2">
    <location>
        <position position="307"/>
    </location>
    <ligand>
        <name>UDP</name>
        <dbReference type="ChEBI" id="CHEBI:58223"/>
    </ligand>
</feature>
<feature type="binding site" evidence="2">
    <location>
        <position position="321"/>
    </location>
    <ligand>
        <name>UDP</name>
        <dbReference type="ChEBI" id="CHEBI:58223"/>
    </ligand>
</feature>
<feature type="binding site" evidence="2">
    <location>
        <position position="413"/>
    </location>
    <ligand>
        <name>Mg(2+)</name>
        <dbReference type="ChEBI" id="CHEBI:18420"/>
    </ligand>
</feature>
<feature type="binding site" evidence="2">
    <location>
        <position position="416"/>
    </location>
    <ligand>
        <name>an N-acyl-D-mannosamine 6-phosphate</name>
        <dbReference type="ChEBI" id="CHEBI:57666"/>
    </ligand>
</feature>
<feature type="binding site" evidence="2">
    <location>
        <position position="417"/>
    </location>
    <ligand>
        <name>ADP</name>
        <dbReference type="ChEBI" id="CHEBI:456216"/>
    </ligand>
</feature>
<feature type="binding site" evidence="2">
    <location>
        <position position="418"/>
    </location>
    <ligand>
        <name>ADP</name>
        <dbReference type="ChEBI" id="CHEBI:456216"/>
    </ligand>
</feature>
<feature type="binding site" evidence="2">
    <location>
        <position position="420"/>
    </location>
    <ligand>
        <name>ADP</name>
        <dbReference type="ChEBI" id="CHEBI:456216"/>
    </ligand>
</feature>
<feature type="binding site" evidence="2">
    <location>
        <position position="476"/>
    </location>
    <ligand>
        <name>an N-acyl-D-mannosamine</name>
        <dbReference type="ChEBI" id="CHEBI:16062"/>
    </ligand>
</feature>
<feature type="binding site" evidence="2">
    <location>
        <position position="476"/>
    </location>
    <ligand>
        <name>an N-acyl-D-mannosamine 6-phosphate</name>
        <dbReference type="ChEBI" id="CHEBI:57666"/>
    </ligand>
</feature>
<feature type="binding site" evidence="2">
    <location>
        <position position="477"/>
    </location>
    <ligand>
        <name>an N-acyl-D-mannosamine</name>
        <dbReference type="ChEBI" id="CHEBI:16062"/>
    </ligand>
</feature>
<feature type="binding site" evidence="2">
    <location>
        <position position="477"/>
    </location>
    <ligand>
        <name>an N-acyl-D-mannosamine 6-phosphate</name>
        <dbReference type="ChEBI" id="CHEBI:57666"/>
    </ligand>
</feature>
<feature type="binding site" evidence="2">
    <location>
        <position position="489"/>
    </location>
    <ligand>
        <name>an N-acyl-D-mannosamine</name>
        <dbReference type="ChEBI" id="CHEBI:16062"/>
    </ligand>
</feature>
<feature type="binding site" evidence="2">
    <location>
        <position position="489"/>
    </location>
    <ligand>
        <name>an N-acyl-D-mannosamine 6-phosphate</name>
        <dbReference type="ChEBI" id="CHEBI:57666"/>
    </ligand>
</feature>
<feature type="binding site" evidence="2">
    <location>
        <position position="516"/>
    </location>
    <ligand>
        <name>an N-acyl-D-mannosamine</name>
        <dbReference type="ChEBI" id="CHEBI:16062"/>
    </ligand>
</feature>
<feature type="binding site" evidence="2">
    <location>
        <position position="516"/>
    </location>
    <ligand>
        <name>an N-acyl-D-mannosamine 6-phosphate</name>
        <dbReference type="ChEBI" id="CHEBI:57666"/>
    </ligand>
</feature>
<feature type="binding site" evidence="2">
    <location>
        <position position="517"/>
    </location>
    <ligand>
        <name>an N-acyl-D-mannosamine</name>
        <dbReference type="ChEBI" id="CHEBI:16062"/>
    </ligand>
</feature>
<feature type="binding site" evidence="2">
    <location>
        <position position="517"/>
    </location>
    <ligand>
        <name>an N-acyl-D-mannosamine 6-phosphate</name>
        <dbReference type="ChEBI" id="CHEBI:57666"/>
    </ligand>
</feature>
<feature type="binding site" evidence="2">
    <location>
        <position position="545"/>
    </location>
    <ligand>
        <name>an N-acyl-D-mannosamine 6-phosphate</name>
        <dbReference type="ChEBI" id="CHEBI:57666"/>
    </ligand>
</feature>
<feature type="binding site" evidence="2">
    <location>
        <position position="566"/>
    </location>
    <ligand>
        <name>an N-acyl-D-mannosamine</name>
        <dbReference type="ChEBI" id="CHEBI:16062"/>
    </ligand>
</feature>
<feature type="binding site" evidence="2">
    <location>
        <position position="569"/>
    </location>
    <ligand>
        <name>an N-acyl-D-mannosamine</name>
        <dbReference type="ChEBI" id="CHEBI:16062"/>
    </ligand>
</feature>
<feature type="binding site" evidence="2">
    <location>
        <position position="569"/>
    </location>
    <ligand>
        <name>an N-acyl-D-mannosamine 6-phosphate</name>
        <dbReference type="ChEBI" id="CHEBI:57666"/>
    </ligand>
</feature>
<feature type="binding site" evidence="2">
    <location>
        <position position="569"/>
    </location>
    <ligand>
        <name>Zn(2+)</name>
        <dbReference type="ChEBI" id="CHEBI:29105"/>
        <note>structural</note>
    </ligand>
</feature>
<feature type="binding site" evidence="2">
    <location>
        <position position="579"/>
    </location>
    <ligand>
        <name>Zn(2+)</name>
        <dbReference type="ChEBI" id="CHEBI:29105"/>
        <note>structural</note>
    </ligand>
</feature>
<feature type="binding site" evidence="2">
    <location>
        <position position="581"/>
    </location>
    <ligand>
        <name>Zn(2+)</name>
        <dbReference type="ChEBI" id="CHEBI:29105"/>
        <note>structural</note>
    </ligand>
</feature>
<feature type="binding site" evidence="2">
    <location>
        <position position="586"/>
    </location>
    <ligand>
        <name>Zn(2+)</name>
        <dbReference type="ChEBI" id="CHEBI:29105"/>
        <note>structural</note>
    </ligand>
</feature>
<feature type="binding site" evidence="2">
    <location>
        <position position="588"/>
    </location>
    <ligand>
        <name>an N-acyl-D-mannosamine</name>
        <dbReference type="ChEBI" id="CHEBI:16062"/>
    </ligand>
</feature>
<feature type="binding site" evidence="2">
    <location>
        <position position="588"/>
    </location>
    <ligand>
        <name>an N-acyl-D-mannosamine 6-phosphate</name>
        <dbReference type="ChEBI" id="CHEBI:57666"/>
    </ligand>
</feature>
<feature type="mutagenesis site" description="Loss UDP-N-acetylglucosamine 2-epimerase activity. No effect on N-acylmannosamine kinase activity. Does not interfere with enzyme oligomerization." evidence="5">
    <original>H</original>
    <variation>A</variation>
    <location>
        <position position="49"/>
    </location>
</feature>
<feature type="mutagenesis site" description="Loss UDP-N-acetylglucosamine 2-epimerase activity. No effect on N-acylmannosamine kinase activity. Partial reduction of the dimerization process." evidence="5">
    <original>H</original>
    <variation>A</variation>
    <location>
        <position position="110"/>
    </location>
</feature>
<feature type="mutagenesis site" description="Loss UDP-N-acetylglucosamine 2-epimerase activity. No effect on N-acylmannosamine kinase activity. Partial reduction of the dimerization process." evidence="5">
    <original>H</original>
    <variation>A</variation>
    <location>
        <position position="132"/>
    </location>
</feature>
<feature type="mutagenesis site" description="Loss UDP-N-acetylglucosamine 2-epimerase activity. No effect on N-acylmannosamine kinase activity. Strong reduction of the dimerization process." evidence="5">
    <original>H</original>
    <variation>A</variation>
    <location>
        <position position="155"/>
    </location>
</feature>
<feature type="mutagenesis site" description="Loss UDP-N-acetylglucosamine 2-epimerase activity. No effect on N-acylmannosamine kinase activity. Strong reduction of the dimerization process." evidence="5">
    <original>H</original>
    <variation>A</variation>
    <location>
        <position position="157"/>
    </location>
</feature>
<feature type="mutagenesis site" description="No effect on UDP-N-acetylglucosamine 2-epimerase activity. Does not affect feedback inhibition by CMP-Neu5Ac. Loss of N-acylmannosamine kinase activity. Does not interfere with oligomerization." evidence="5">
    <original>D</original>
    <variation>K</variation>
    <variation>N</variation>
    <location>
        <position position="413"/>
    </location>
</feature>
<feature type="mutagenesis site" description="No effect on UDP-N-acetylglucosamine 2-epimerase activity. Does not affect feedback inhibition by CMP-Neu5Ac. Loss of N-acylmannosamine kinase activity. Does not interfere with oligomerization." evidence="5">
    <original>R</original>
    <variation>M</variation>
    <location>
        <position position="420"/>
    </location>
</feature>
<reference key="1">
    <citation type="journal article" date="1997" name="J. Biol. Chem.">
        <title>A bifunctional enzyme catalyzes the first two steps in N-acetylneuraminic acid biosynthesis of rat liver. Molecular cloning and functional expression of UDP-N-acetyl-glucosamine 2-epimerase/N-acetylmannosamine kinase.</title>
        <authorList>
            <person name="Staesche R."/>
            <person name="Hinderlich S."/>
            <person name="Weise C."/>
            <person name="Effertz K."/>
            <person name="Lucka L."/>
            <person name="Moormann P."/>
            <person name="Reutter W."/>
        </authorList>
    </citation>
    <scope>NUCLEOTIDE SEQUENCE [MRNA]</scope>
    <scope>PROTEIN SEQUENCE OF 153-162; 269-277; 309-321; 434-441 AND 491-500</scope>
    <scope>FUNCTION</scope>
    <scope>CATALYTIC ACTIVITY</scope>
    <scope>PATHWAY</scope>
    <scope>SUBCELLULAR LOCATION</scope>
    <scope>TISSUE SPECIFICITY</scope>
    <source>
        <tissue>Liver</tissue>
    </source>
</reference>
<reference key="2">
    <citation type="journal article" date="2004" name="Genome Res.">
        <title>The status, quality, and expansion of the NIH full-length cDNA project: the Mammalian Gene Collection (MGC).</title>
        <authorList>
            <consortium name="The MGC Project Team"/>
        </authorList>
    </citation>
    <scope>NUCLEOTIDE SEQUENCE [LARGE SCALE MRNA]</scope>
    <source>
        <tissue>Prostate</tissue>
    </source>
</reference>
<reference key="3">
    <citation type="journal article" date="1997" name="J. Biol. Chem.">
        <title>A bifunctional enzyme catalyzes the first two steps in N-acetylneuraminic acid biosynthesis of rat liver. Purification and characterization of UDP-N-acetylglucosamine 2-epimerase/N-acetylmannosamine kinase.</title>
        <authorList>
            <person name="Hinderlich S."/>
            <person name="Staesche R."/>
            <person name="Zeitler R."/>
            <person name="Reutter W."/>
        </authorList>
    </citation>
    <scope>FUNCTION</scope>
    <scope>CATALYTIC ACTIVITY</scope>
    <scope>ACTIVITY REGULATION</scope>
    <scope>PATHWAY</scope>
    <scope>SUBUNIT</scope>
    <scope>SUBCELLULAR LOCATION</scope>
</reference>
<reference key="4">
    <citation type="journal article" date="1999" name="Eur. J. Biochem.">
        <title>Tissue expression and amino acid sequence of murine UDP-N-acetylglucosamine-2-epimerase/N-acetylmannosamine kinase.</title>
        <authorList>
            <person name="Horstkorte R."/>
            <person name="Noehring S."/>
            <person name="Wiechens N."/>
            <person name="Schwarzkopf M."/>
            <person name="Danker K."/>
            <person name="Reutter W."/>
            <person name="Lucka L."/>
        </authorList>
    </citation>
    <scope>TISSUE SPECIFICITY</scope>
</reference>
<reference key="5">
    <citation type="journal article" date="1999" name="J. Biol. Chem.">
        <title>Selective loss of either the epimerase or kinase activity of UDP-N-acetylglucosamine 2-epimerase/N-acetylmannosamine kinase due to site-directed mutagenesis based on sequence alignments.</title>
        <authorList>
            <person name="Effertz K."/>
            <person name="Hinderlich S."/>
            <person name="Reutter W."/>
        </authorList>
    </citation>
    <scope>FUNCTION</scope>
    <scope>CATALYTIC ACTIVITY</scope>
    <scope>PATHWAY</scope>
    <scope>REGION</scope>
    <scope>MUTAGENESIS OF HIS-49; HIS-110; HIS-132; HIS-155; HIS-157; ASP-413 AND ARG-420</scope>
</reference>
<reference key="6">
    <citation type="journal article" date="1999" name="Science">
        <title>UDP-GlcNAc 2-epimerase: a regulator of cell surface sialylation.</title>
        <authorList>
            <person name="Keppler O.T."/>
            <person name="Hinderlich S."/>
            <person name="Langner J."/>
            <person name="Schwartz-Albiez R."/>
            <person name="Reutter W."/>
            <person name="Pawlita M."/>
        </authorList>
    </citation>
    <scope>FUNCTION</scope>
    <scope>CATALYTIC ACTIVITY</scope>
</reference>
<keyword id="KW-0021">Allosteric enzyme</keyword>
<keyword id="KW-0067">ATP-binding</keyword>
<keyword id="KW-0963">Cytoplasm</keyword>
<keyword id="KW-0903">Direct protein sequencing</keyword>
<keyword id="KW-0378">Hydrolase</keyword>
<keyword id="KW-0418">Kinase</keyword>
<keyword id="KW-0460">Magnesium</keyword>
<keyword id="KW-0479">Metal-binding</keyword>
<keyword id="KW-0511">Multifunctional enzyme</keyword>
<keyword id="KW-0547">Nucleotide-binding</keyword>
<keyword id="KW-0597">Phosphoprotein</keyword>
<keyword id="KW-1185">Reference proteome</keyword>
<keyword id="KW-0808">Transferase</keyword>
<keyword id="KW-0862">Zinc</keyword>
<comment type="function">
    <text evidence="4 5 6 7">Bifunctional enzyme that possesses both UDP-N-acetylglucosamine 2-epimerase and N-acetylmannosamine kinase activities, and serves as the initiator of the biosynthetic pathway leading to the production of N-acetylneuraminic acid (NeuAc), a critical precursor in the synthesis of sialic acids. By catalyzing this pivotal and rate-limiting step in sialic acid biosynthesis, this enzyme assumes a pivotal role in governing the regulation of cell surface sialylation (PubMed:10497249, PubMed:9305887, PubMed:9305888). Sialic acids represent a category of negatively charged sugars that reside on the surface of cells as terminal components of glycoconjugates and mediate important functions in various cellular processes, including cell adhesion, signal transduction, and cellular recognition (PubMed:10334995).</text>
</comment>
<comment type="catalytic activity">
    <reaction evidence="4 5 6 7">
        <text>UDP-N-acetyl-alpha-D-glucosamine + H2O = aldehydo-N-acetyl-D-mannosamine + UDP + H(+)</text>
        <dbReference type="Rhea" id="RHEA:30683"/>
        <dbReference type="ChEBI" id="CHEBI:15377"/>
        <dbReference type="ChEBI" id="CHEBI:15378"/>
        <dbReference type="ChEBI" id="CHEBI:17122"/>
        <dbReference type="ChEBI" id="CHEBI:57705"/>
        <dbReference type="ChEBI" id="CHEBI:58223"/>
        <dbReference type="EC" id="3.2.1.183"/>
    </reaction>
    <physiologicalReaction direction="left-to-right" evidence="5">
        <dbReference type="Rhea" id="RHEA:30684"/>
    </physiologicalReaction>
</comment>
<comment type="catalytic activity">
    <reaction evidence="5 6 7">
        <text>an N-acyl-D-mannosamine + ATP = an N-acyl-D-mannosamine 6-phosphate + ADP + H(+)</text>
        <dbReference type="Rhea" id="RHEA:23832"/>
        <dbReference type="ChEBI" id="CHEBI:15378"/>
        <dbReference type="ChEBI" id="CHEBI:16062"/>
        <dbReference type="ChEBI" id="CHEBI:30616"/>
        <dbReference type="ChEBI" id="CHEBI:57666"/>
        <dbReference type="ChEBI" id="CHEBI:456216"/>
        <dbReference type="EC" id="2.7.1.60"/>
    </reaction>
    <physiologicalReaction direction="left-to-right" evidence="5">
        <dbReference type="Rhea" id="RHEA:23833"/>
    </physiologicalReaction>
</comment>
<comment type="activity regulation">
    <text evidence="1 6">The UDP-N-acetylglucosamine 2-epimerase activity, in contrast to the N-acetylmannosamine kinase activity, exhibits allosteric regulation by cytidine monophosphate-N-acetylneuraminic acid (CMP-Neu5Ac), the end product of neuraminic acid biosynthesis (PubMed:9305887). Moreover, the activity is contingent upon the oligomeric state of the enzyme. The monomeric form is inactive, while the dimeric form selectively catalyzes the phosphorylation of N-acetylmannosamine. The hexameric form, on the other hand, demonstrates full proficiency in both enzyme activities (PubMed:9305887). Furthermore, the UDP-N-acetylglucosamine 2-epimerase activity is increased by PKC-mediated phosphorylation (By similarity).</text>
</comment>
<comment type="pathway">
    <text evidence="5 6 7">Amino-sugar metabolism; N-acetylneuraminate biosynthesis.</text>
</comment>
<comment type="subunit">
    <text evidence="6">Homodimer. Homotetramer. Homohexamer (PubMed:9305887). The hexameric form exhibits both enzyme activities, whereas the dimeric form only catalyzes the phosphorylation of N-acyl-D-mannosamine (PubMed:9305887).</text>
</comment>
<comment type="interaction">
    <interactant intactId="EBI-7109445">
        <id>O35826</id>
    </interactant>
    <interactant intactId="EBI-711925">
        <id>Q05516</id>
        <label>ZBTB16</label>
    </interactant>
    <organismsDiffer>true</organismsDiffer>
    <experiments>2</experiments>
</comment>
<comment type="subcellular location">
    <subcellularLocation>
        <location evidence="6 7">Cytoplasm</location>
        <location evidence="6 7">Cytosol</location>
    </subcellularLocation>
</comment>
<comment type="tissue specificity">
    <text evidence="3 7">Widely expressed. Highest expression is observed in liver.</text>
</comment>
<comment type="PTM">
    <text evidence="1">Phosphorylated. Phosphorylation by PKC activates the UDP-N-acetylglucosamine 2-epimerase activity.</text>
</comment>
<comment type="similarity">
    <text evidence="8">In the N-terminal section; belongs to the UDP-N-acetylglucosamine 2-epimerase family.</text>
</comment>
<comment type="similarity">
    <text evidence="8">In the C-terminal section; belongs to the ROK (NagC/XylR) family.</text>
</comment>
<name>GLCNE_RAT</name>
<proteinExistence type="evidence at protein level"/>
<evidence type="ECO:0000250" key="1">
    <source>
        <dbReference type="UniProtKB" id="Q91WG8"/>
    </source>
</evidence>
<evidence type="ECO:0000250" key="2">
    <source>
        <dbReference type="UniProtKB" id="Q9Y223"/>
    </source>
</evidence>
<evidence type="ECO:0000269" key="3">
    <source>
    </source>
</evidence>
<evidence type="ECO:0000269" key="4">
    <source>
    </source>
</evidence>
<evidence type="ECO:0000269" key="5">
    <source>
    </source>
</evidence>
<evidence type="ECO:0000269" key="6">
    <source>
    </source>
</evidence>
<evidence type="ECO:0000269" key="7">
    <source>
    </source>
</evidence>
<evidence type="ECO:0000305" key="8"/>
<evidence type="ECO:0000305" key="9">
    <source>
    </source>
</evidence>
<evidence type="ECO:0000312" key="10">
    <source>
        <dbReference type="RGD" id="69239"/>
    </source>
</evidence>
<dbReference type="EC" id="3.2.1.183" evidence="4 5 6 7"/>
<dbReference type="EC" id="2.7.1.60" evidence="5 6 7"/>
<dbReference type="EMBL" id="Y07744">
    <property type="protein sequence ID" value="CAA69024.1"/>
    <property type="molecule type" value="mRNA"/>
</dbReference>
<dbReference type="EMBL" id="BC062011">
    <property type="protein sequence ID" value="AAH62011.1"/>
    <property type="molecule type" value="mRNA"/>
</dbReference>
<dbReference type="RefSeq" id="NP_446217.1">
    <property type="nucleotide sequence ID" value="NM_053765.3"/>
</dbReference>
<dbReference type="RefSeq" id="XP_006238070.1">
    <property type="nucleotide sequence ID" value="XM_006238008.3"/>
</dbReference>
<dbReference type="RefSeq" id="XP_006238071.1">
    <property type="nucleotide sequence ID" value="XM_006238009.5"/>
</dbReference>
<dbReference type="RefSeq" id="XP_038965053.1">
    <property type="nucleotide sequence ID" value="XM_039109125.2"/>
</dbReference>
<dbReference type="RefSeq" id="XP_038965055.1">
    <property type="nucleotide sequence ID" value="XM_039109127.2"/>
</dbReference>
<dbReference type="SMR" id="O35826"/>
<dbReference type="BioGRID" id="250408">
    <property type="interactions" value="6"/>
</dbReference>
<dbReference type="FunCoup" id="O35826">
    <property type="interactions" value="172"/>
</dbReference>
<dbReference type="IntAct" id="O35826">
    <property type="interactions" value="5"/>
</dbReference>
<dbReference type="MINT" id="O35826"/>
<dbReference type="STRING" id="10116.ENSRNOP00000074334"/>
<dbReference type="GlyGen" id="O35826">
    <property type="glycosylation" value="1 site, 1 O-linked glycan (1 site)"/>
</dbReference>
<dbReference type="iPTMnet" id="O35826"/>
<dbReference type="PhosphoSitePlus" id="O35826"/>
<dbReference type="jPOST" id="O35826"/>
<dbReference type="PaxDb" id="10116-ENSRNOP00000019532"/>
<dbReference type="Ensembl" id="ENSRNOT00000019532.6">
    <property type="protein sequence ID" value="ENSRNOP00000019532.3"/>
    <property type="gene ID" value="ENSRNOG00000014365.8"/>
</dbReference>
<dbReference type="GeneID" id="114711"/>
<dbReference type="KEGG" id="rno:114711"/>
<dbReference type="UCSC" id="RGD:69239">
    <property type="organism name" value="rat"/>
</dbReference>
<dbReference type="AGR" id="RGD:69239"/>
<dbReference type="CTD" id="10020"/>
<dbReference type="RGD" id="69239">
    <property type="gene designation" value="Gne"/>
</dbReference>
<dbReference type="eggNOG" id="ENOG502QUGI">
    <property type="taxonomic scope" value="Eukaryota"/>
</dbReference>
<dbReference type="GeneTree" id="ENSGT00390000017246"/>
<dbReference type="HOGENOM" id="CLU_023411_0_0_1"/>
<dbReference type="InParanoid" id="O35826"/>
<dbReference type="OrthoDB" id="2968753at2759"/>
<dbReference type="PhylomeDB" id="O35826"/>
<dbReference type="BioCyc" id="MetaCyc:MONOMER-14506"/>
<dbReference type="BRENDA" id="5.1.3.14">
    <property type="organism ID" value="5301"/>
</dbReference>
<dbReference type="Reactome" id="R-RNO-4085001">
    <property type="pathway name" value="Sialic acid metabolism"/>
</dbReference>
<dbReference type="SABIO-RK" id="O35826"/>
<dbReference type="UniPathway" id="UPA00630"/>
<dbReference type="PRO" id="PR:O35826"/>
<dbReference type="Proteomes" id="UP000002494">
    <property type="component" value="Chromosome 5"/>
</dbReference>
<dbReference type="Bgee" id="ENSRNOG00000014365">
    <property type="expression patterns" value="Expressed in colon and 20 other cell types or tissues"/>
</dbReference>
<dbReference type="ExpressionAtlas" id="O35826">
    <property type="expression patterns" value="baseline and differential"/>
</dbReference>
<dbReference type="GO" id="GO:0005829">
    <property type="term" value="C:cytosol"/>
    <property type="evidence" value="ECO:0000314"/>
    <property type="project" value="UniProtKB"/>
</dbReference>
<dbReference type="GO" id="GO:0005524">
    <property type="term" value="F:ATP binding"/>
    <property type="evidence" value="ECO:0007669"/>
    <property type="project" value="UniProtKB-KW"/>
</dbReference>
<dbReference type="GO" id="GO:0004553">
    <property type="term" value="F:hydrolase activity, hydrolyzing O-glycosyl compounds"/>
    <property type="evidence" value="ECO:0007669"/>
    <property type="project" value="InterPro"/>
</dbReference>
<dbReference type="GO" id="GO:0046872">
    <property type="term" value="F:metal ion binding"/>
    <property type="evidence" value="ECO:0007669"/>
    <property type="project" value="UniProtKB-KW"/>
</dbReference>
<dbReference type="GO" id="GO:0009384">
    <property type="term" value="F:N-acylmannosamine kinase activity"/>
    <property type="evidence" value="ECO:0000314"/>
    <property type="project" value="UniProtKB"/>
</dbReference>
<dbReference type="GO" id="GO:0008761">
    <property type="term" value="F:UDP-N-acetylglucosamine 2-epimerase activity"/>
    <property type="evidence" value="ECO:0000314"/>
    <property type="project" value="UniProtKB"/>
</dbReference>
<dbReference type="GO" id="GO:0006055">
    <property type="term" value="P:CMP-N-acetylneuraminate biosynthetic process"/>
    <property type="evidence" value="ECO:0000266"/>
    <property type="project" value="RGD"/>
</dbReference>
<dbReference type="GO" id="GO:0070085">
    <property type="term" value="P:glycosylation"/>
    <property type="evidence" value="ECO:0000266"/>
    <property type="project" value="RGD"/>
</dbReference>
<dbReference type="GO" id="GO:0006045">
    <property type="term" value="P:N-acetylglucosamine biosynthetic process"/>
    <property type="evidence" value="ECO:0007669"/>
    <property type="project" value="UniProtKB-UniPathway"/>
</dbReference>
<dbReference type="GO" id="GO:0046380">
    <property type="term" value="P:N-acetylneuraminate biosynthetic process"/>
    <property type="evidence" value="ECO:0000266"/>
    <property type="project" value="RGD"/>
</dbReference>
<dbReference type="GO" id="GO:0006054">
    <property type="term" value="P:N-acetylneuraminate metabolic process"/>
    <property type="evidence" value="ECO:0000266"/>
    <property type="project" value="RGD"/>
</dbReference>
<dbReference type="GO" id="GO:0006047">
    <property type="term" value="P:UDP-N-acetylglucosamine metabolic process"/>
    <property type="evidence" value="ECO:0007669"/>
    <property type="project" value="InterPro"/>
</dbReference>
<dbReference type="CDD" id="cd24060">
    <property type="entry name" value="ASKHA_NBD_ROK_GNE"/>
    <property type="match status" value="1"/>
</dbReference>
<dbReference type="CDD" id="cd03786">
    <property type="entry name" value="GTB_UDP-GlcNAc_2-Epimerase"/>
    <property type="match status" value="1"/>
</dbReference>
<dbReference type="FunFam" id="3.30.420.40:FF:000053">
    <property type="entry name" value="Bifunctional UDP-N-acetylglucosamine 2-epimerase/N-acetylmannosamine kinase"/>
    <property type="match status" value="1"/>
</dbReference>
<dbReference type="FunFam" id="3.30.420.40:FF:000060">
    <property type="entry name" value="Bifunctional UDP-N-acetylglucosamine 2-epimerase/N-acetylmannosamine kinase"/>
    <property type="match status" value="1"/>
</dbReference>
<dbReference type="FunFam" id="3.40.50.2000:FF:000013">
    <property type="entry name" value="Bifunctional UDP-N-acetylglucosamine 2-epimerase/N-acetylmannosamine kinase"/>
    <property type="match status" value="1"/>
</dbReference>
<dbReference type="FunFam" id="3.40.50.2000:FF:000015">
    <property type="entry name" value="Bifunctional UDP-N-acetylglucosamine 2-epimerase/N-acetylmannosamine kinase"/>
    <property type="match status" value="1"/>
</dbReference>
<dbReference type="Gene3D" id="3.30.420.40">
    <property type="match status" value="2"/>
</dbReference>
<dbReference type="Gene3D" id="3.40.50.2000">
    <property type="entry name" value="Glycogen Phosphorylase B"/>
    <property type="match status" value="2"/>
</dbReference>
<dbReference type="InterPro" id="IPR043129">
    <property type="entry name" value="ATPase_NBD"/>
</dbReference>
<dbReference type="InterPro" id="IPR000600">
    <property type="entry name" value="ROK"/>
</dbReference>
<dbReference type="InterPro" id="IPR020004">
    <property type="entry name" value="UDP-GlcNAc_Epase"/>
</dbReference>
<dbReference type="InterPro" id="IPR003331">
    <property type="entry name" value="UDP_GlcNAc_Epimerase_2_dom"/>
</dbReference>
<dbReference type="NCBIfam" id="TIGR03568">
    <property type="entry name" value="NeuC_NnaA"/>
    <property type="match status" value="1"/>
</dbReference>
<dbReference type="PANTHER" id="PTHR18964:SF149">
    <property type="entry name" value="BIFUNCTIONAL UDP-N-ACETYLGLUCOSAMINE 2-EPIMERASE_N-ACETYLMANNOSAMINE KINASE"/>
    <property type="match status" value="1"/>
</dbReference>
<dbReference type="PANTHER" id="PTHR18964">
    <property type="entry name" value="ROK (REPRESSOR, ORF, KINASE) FAMILY"/>
    <property type="match status" value="1"/>
</dbReference>
<dbReference type="Pfam" id="PF02350">
    <property type="entry name" value="Epimerase_2"/>
    <property type="match status" value="1"/>
</dbReference>
<dbReference type="Pfam" id="PF00480">
    <property type="entry name" value="ROK"/>
    <property type="match status" value="1"/>
</dbReference>
<dbReference type="PRINTS" id="PR00475">
    <property type="entry name" value="HEXOKINASE"/>
</dbReference>
<dbReference type="SUPFAM" id="SSF53067">
    <property type="entry name" value="Actin-like ATPase domain"/>
    <property type="match status" value="1"/>
</dbReference>
<dbReference type="SUPFAM" id="SSF53756">
    <property type="entry name" value="UDP-Glycosyltransferase/glycogen phosphorylase"/>
    <property type="match status" value="1"/>
</dbReference>
<accession>O35826</accession>
<gene>
    <name evidence="10" type="primary">Gne</name>
    <name type="synonym">Glcne</name>
</gene>
<protein>
    <recommendedName>
        <fullName evidence="9">Bifunctional UDP-N-acetylglucosamine 2-epimerase/N-acetylmannosamine kinase</fullName>
    </recommendedName>
    <alternativeName>
        <fullName>UDP-GlcNAc-2-epimerase/ManAc kinase</fullName>
    </alternativeName>
    <domain>
        <recommendedName>
            <fullName evidence="9">UDP-N-acetylglucosamine 2-epimerase (hydrolyzing)</fullName>
            <ecNumber evidence="4 5 6 7">3.2.1.183</ecNumber>
        </recommendedName>
        <alternativeName>
            <fullName>UDP-GlcNAc-2-epimerase</fullName>
        </alternativeName>
        <alternativeName>
            <fullName>Uridine diphosphate-N-acetylglucosamine-2-epimerase</fullName>
        </alternativeName>
        <alternativeName>
            <fullName>rEpi</fullName>
        </alternativeName>
    </domain>
    <domain>
        <recommendedName>
            <fullName evidence="9">N-acetylmannosamine kinase</fullName>
            <ecNumber evidence="5 6 7">2.7.1.60</ecNumber>
        </recommendedName>
        <alternativeName>
            <fullName>ManAc kinase</fullName>
        </alternativeName>
    </domain>
</protein>
<organism>
    <name type="scientific">Rattus norvegicus</name>
    <name type="common">Rat</name>
    <dbReference type="NCBI Taxonomy" id="10116"/>
    <lineage>
        <taxon>Eukaryota</taxon>
        <taxon>Metazoa</taxon>
        <taxon>Chordata</taxon>
        <taxon>Craniata</taxon>
        <taxon>Vertebrata</taxon>
        <taxon>Euteleostomi</taxon>
        <taxon>Mammalia</taxon>
        <taxon>Eutheria</taxon>
        <taxon>Euarchontoglires</taxon>
        <taxon>Glires</taxon>
        <taxon>Rodentia</taxon>
        <taxon>Myomorpha</taxon>
        <taxon>Muroidea</taxon>
        <taxon>Muridae</taxon>
        <taxon>Murinae</taxon>
        <taxon>Rattus</taxon>
    </lineage>
</organism>